<keyword id="KW-0002">3D-structure</keyword>
<keyword id="KW-0028">Amino-acid biosynthesis</keyword>
<keyword id="KW-0057">Aromatic amino acid biosynthesis</keyword>
<keyword id="KW-0067">ATP-binding</keyword>
<keyword id="KW-0963">Cytoplasm</keyword>
<keyword id="KW-0418">Kinase</keyword>
<keyword id="KW-0460">Magnesium</keyword>
<keyword id="KW-0479">Metal-binding</keyword>
<keyword id="KW-0547">Nucleotide-binding</keyword>
<keyword id="KW-1185">Reference proteome</keyword>
<keyword id="KW-0808">Transferase</keyword>
<reference key="1">
    <citation type="journal article" date="1997" name="Nature">
        <title>The complete genome sequence of the gastric pathogen Helicobacter pylori.</title>
        <authorList>
            <person name="Tomb J.-F."/>
            <person name="White O."/>
            <person name="Kerlavage A.R."/>
            <person name="Clayton R.A."/>
            <person name="Sutton G.G."/>
            <person name="Fleischmann R.D."/>
            <person name="Ketchum K.A."/>
            <person name="Klenk H.-P."/>
            <person name="Gill S.R."/>
            <person name="Dougherty B.A."/>
            <person name="Nelson K.E."/>
            <person name="Quackenbush J."/>
            <person name="Zhou L."/>
            <person name="Kirkness E.F."/>
            <person name="Peterson S.N."/>
            <person name="Loftus B.J."/>
            <person name="Richardson D.L."/>
            <person name="Dodson R.J."/>
            <person name="Khalak H.G."/>
            <person name="Glodek A."/>
            <person name="McKenney K."/>
            <person name="FitzGerald L.M."/>
            <person name="Lee N."/>
            <person name="Adams M.D."/>
            <person name="Hickey E.K."/>
            <person name="Berg D.E."/>
            <person name="Gocayne J.D."/>
            <person name="Utterback T.R."/>
            <person name="Peterson J.D."/>
            <person name="Kelley J.M."/>
            <person name="Cotton M.D."/>
            <person name="Weidman J.F."/>
            <person name="Fujii C."/>
            <person name="Bowman C."/>
            <person name="Watthey L."/>
            <person name="Wallin E."/>
            <person name="Hayes W.S."/>
            <person name="Borodovsky M."/>
            <person name="Karp P.D."/>
            <person name="Smith H.O."/>
            <person name="Fraser C.M."/>
            <person name="Venter J.C."/>
        </authorList>
    </citation>
    <scope>NUCLEOTIDE SEQUENCE [LARGE SCALE GENOMIC DNA]</scope>
    <source>
        <strain>ATCC 700392 / 26695</strain>
    </source>
</reference>
<reference key="2">
    <citation type="journal article" date="2007" name="Bioorg. Med. Chem.">
        <title>Discovery of Helicobacter pylori shikimate kinase inhibitors: bioassay and molecular modeling.</title>
        <authorList>
            <person name="Han C."/>
            <person name="Zhang J."/>
            <person name="Chen L."/>
            <person name="Chen K."/>
            <person name="Shen X."/>
            <person name="Jiang H."/>
        </authorList>
    </citation>
    <scope>INHIBITORS</scope>
</reference>
<reference key="3">
    <citation type="journal article" date="2005" name="J. Bacteriol.">
        <title>Structural basis for shikimate-binding specificity of Helicobacter pylori shikimate kinase.</title>
        <authorList>
            <person name="Cheng W.-C."/>
            <person name="Chang Y.-N."/>
            <person name="Wang W.-C."/>
        </authorList>
    </citation>
    <scope>X-RAY CRYSTALLOGRAPHY (1.8 ANGSTROMS) OF APOENZYME AND IN COMPLEX WITH SHIKIMATE</scope>
    <scope>FUNCTION</scope>
    <scope>CATALYTIC ACTIVITY</scope>
    <scope>KINETIC PARAMETERS</scope>
    <source>
        <strain>ATCC 700392 / 26695</strain>
    </source>
</reference>
<sequence length="162" mass="18411">MQHLVLIGFMGSGKSSLAQELGLALKLEVLDTDMIISERVGLSVREIFEELGEDNFRMFEKNLIDELKTLKTPHVISTGGGIVMHENLKGLGTTFYLKMDFETLIKRLNQKEREKRPLLNNLTQAKELFEKRQALYEKNASFIIDARGGLNNSLKQVLQFIA</sequence>
<gene>
    <name type="primary">aroK</name>
    <name type="ordered locus">HP_0157</name>
</gene>
<proteinExistence type="evidence at protein level"/>
<comment type="function">
    <text evidence="2">Catalyzes the specific phosphorylation of the 3-hydroxyl group of shikimic acid using ATP as a cosubstrate.</text>
</comment>
<comment type="catalytic activity">
    <reaction evidence="2">
        <text>shikimate + ATP = 3-phosphoshikimate + ADP + H(+)</text>
        <dbReference type="Rhea" id="RHEA:13121"/>
        <dbReference type="ChEBI" id="CHEBI:15378"/>
        <dbReference type="ChEBI" id="CHEBI:30616"/>
        <dbReference type="ChEBI" id="CHEBI:36208"/>
        <dbReference type="ChEBI" id="CHEBI:145989"/>
        <dbReference type="ChEBI" id="CHEBI:456216"/>
        <dbReference type="EC" id="2.7.1.71"/>
    </reaction>
</comment>
<comment type="cofactor">
    <cofactor evidence="1">
        <name>Mg(2+)</name>
        <dbReference type="ChEBI" id="CHEBI:18420"/>
    </cofactor>
    <text evidence="1">Binds 1 Mg(2+) ion per subunit.</text>
</comment>
<comment type="biophysicochemical properties">
    <kinetics>
        <KM evidence="2">60 uM for shikimate</KM>
        <KM evidence="2">101 uM for MgATP</KM>
        <Vmax evidence="2">22.0 umol/min/mg enzyme toward shikimate</Vmax>
        <Vmax evidence="2">26.0 umol/min/mg enzyme toward MgATP</Vmax>
    </kinetics>
</comment>
<comment type="pathway">
    <text>Metabolic intermediate biosynthesis; chorismate biosynthesis; chorismate from D-erythrose 4-phosphate and phosphoenolpyruvate: step 5/7.</text>
</comment>
<comment type="subunit">
    <text evidence="1">Monomer.</text>
</comment>
<comment type="subcellular location">
    <subcellularLocation>
        <location evidence="1">Cytoplasm</location>
    </subcellularLocation>
</comment>
<comment type="similarity">
    <text evidence="3">Belongs to the shikimate kinase family.</text>
</comment>
<protein>
    <recommendedName>
        <fullName>Shikimate kinase</fullName>
        <shortName>SK</shortName>
        <ecNumber>2.7.1.71</ecNumber>
    </recommendedName>
</protein>
<accession>P56073</accession>
<organism>
    <name type="scientific">Helicobacter pylori (strain ATCC 700392 / 26695)</name>
    <name type="common">Campylobacter pylori</name>
    <dbReference type="NCBI Taxonomy" id="85962"/>
    <lineage>
        <taxon>Bacteria</taxon>
        <taxon>Pseudomonadati</taxon>
        <taxon>Campylobacterota</taxon>
        <taxon>Epsilonproteobacteria</taxon>
        <taxon>Campylobacterales</taxon>
        <taxon>Helicobacteraceae</taxon>
        <taxon>Helicobacter</taxon>
    </lineage>
</organism>
<dbReference type="EC" id="2.7.1.71"/>
<dbReference type="EMBL" id="AE000511">
    <property type="protein sequence ID" value="AAD07220.1"/>
    <property type="molecule type" value="Genomic_DNA"/>
</dbReference>
<dbReference type="PIR" id="E64539">
    <property type="entry name" value="E64539"/>
</dbReference>
<dbReference type="RefSeq" id="NP_206956.1">
    <property type="nucleotide sequence ID" value="NC_000915.1"/>
</dbReference>
<dbReference type="RefSeq" id="WP_001164290.1">
    <property type="nucleotide sequence ID" value="NC_018939.1"/>
</dbReference>
<dbReference type="PDB" id="1ZUH">
    <property type="method" value="X-ray"/>
    <property type="resolution" value="1.80 A"/>
    <property type="chains" value="A=1-162"/>
</dbReference>
<dbReference type="PDB" id="1ZUI">
    <property type="method" value="X-ray"/>
    <property type="resolution" value="2.30 A"/>
    <property type="chains" value="A=1-162"/>
</dbReference>
<dbReference type="PDB" id="3HR7">
    <property type="method" value="X-ray"/>
    <property type="resolution" value="1.80 A"/>
    <property type="chains" value="A/B=1-162"/>
</dbReference>
<dbReference type="PDB" id="3MRS">
    <property type="method" value="X-ray"/>
    <property type="resolution" value="2.40 A"/>
    <property type="chains" value="A=1-162"/>
</dbReference>
<dbReference type="PDB" id="3MUF">
    <property type="method" value="X-ray"/>
    <property type="resolution" value="2.30 A"/>
    <property type="chains" value="A=1-162"/>
</dbReference>
<dbReference type="PDB" id="3N2E">
    <property type="method" value="X-ray"/>
    <property type="resolution" value="2.53 A"/>
    <property type="chains" value="A/B/C=1-162"/>
</dbReference>
<dbReference type="PDBsum" id="1ZUH"/>
<dbReference type="PDBsum" id="1ZUI"/>
<dbReference type="PDBsum" id="3HR7"/>
<dbReference type="PDBsum" id="3MRS"/>
<dbReference type="PDBsum" id="3MUF"/>
<dbReference type="PDBsum" id="3N2E"/>
<dbReference type="SMR" id="P56073"/>
<dbReference type="FunCoup" id="P56073">
    <property type="interactions" value="363"/>
</dbReference>
<dbReference type="STRING" id="85962.HP_0157"/>
<dbReference type="BindingDB" id="P56073"/>
<dbReference type="ChEMBL" id="CHEMBL1075089"/>
<dbReference type="PaxDb" id="85962-C694_00785"/>
<dbReference type="EnsemblBacteria" id="AAD07220">
    <property type="protein sequence ID" value="AAD07220"/>
    <property type="gene ID" value="HP_0157"/>
</dbReference>
<dbReference type="KEGG" id="heo:C694_00785"/>
<dbReference type="KEGG" id="hpy:HP_0157"/>
<dbReference type="PATRIC" id="fig|85962.47.peg.170"/>
<dbReference type="eggNOG" id="COG0703">
    <property type="taxonomic scope" value="Bacteria"/>
</dbReference>
<dbReference type="InParanoid" id="P56073"/>
<dbReference type="OrthoDB" id="9800332at2"/>
<dbReference type="PhylomeDB" id="P56073"/>
<dbReference type="BRENDA" id="2.7.1.71">
    <property type="organism ID" value="2604"/>
</dbReference>
<dbReference type="SABIO-RK" id="P56073"/>
<dbReference type="UniPathway" id="UPA00053">
    <property type="reaction ID" value="UER00088"/>
</dbReference>
<dbReference type="EvolutionaryTrace" id="P56073"/>
<dbReference type="PRO" id="PR:P56073"/>
<dbReference type="Proteomes" id="UP000000429">
    <property type="component" value="Chromosome"/>
</dbReference>
<dbReference type="GO" id="GO:0005829">
    <property type="term" value="C:cytosol"/>
    <property type="evidence" value="ECO:0000318"/>
    <property type="project" value="GO_Central"/>
</dbReference>
<dbReference type="GO" id="GO:0005524">
    <property type="term" value="F:ATP binding"/>
    <property type="evidence" value="ECO:0007669"/>
    <property type="project" value="UniProtKB-UniRule"/>
</dbReference>
<dbReference type="GO" id="GO:0000287">
    <property type="term" value="F:magnesium ion binding"/>
    <property type="evidence" value="ECO:0007669"/>
    <property type="project" value="UniProtKB-UniRule"/>
</dbReference>
<dbReference type="GO" id="GO:0004765">
    <property type="term" value="F:shikimate kinase activity"/>
    <property type="evidence" value="ECO:0000318"/>
    <property type="project" value="GO_Central"/>
</dbReference>
<dbReference type="GO" id="GO:0008652">
    <property type="term" value="P:amino acid biosynthetic process"/>
    <property type="evidence" value="ECO:0007669"/>
    <property type="project" value="UniProtKB-KW"/>
</dbReference>
<dbReference type="GO" id="GO:0009073">
    <property type="term" value="P:aromatic amino acid family biosynthetic process"/>
    <property type="evidence" value="ECO:0007669"/>
    <property type="project" value="UniProtKB-KW"/>
</dbReference>
<dbReference type="GO" id="GO:0009423">
    <property type="term" value="P:chorismate biosynthetic process"/>
    <property type="evidence" value="ECO:0007669"/>
    <property type="project" value="UniProtKB-UniRule"/>
</dbReference>
<dbReference type="CDD" id="cd00464">
    <property type="entry name" value="SK"/>
    <property type="match status" value="1"/>
</dbReference>
<dbReference type="FunFam" id="3.40.50.300:FF:001487">
    <property type="entry name" value="Shikimate kinase"/>
    <property type="match status" value="1"/>
</dbReference>
<dbReference type="Gene3D" id="3.40.50.300">
    <property type="entry name" value="P-loop containing nucleotide triphosphate hydrolases"/>
    <property type="match status" value="1"/>
</dbReference>
<dbReference type="HAMAP" id="MF_00109">
    <property type="entry name" value="Shikimate_kinase"/>
    <property type="match status" value="1"/>
</dbReference>
<dbReference type="InterPro" id="IPR027417">
    <property type="entry name" value="P-loop_NTPase"/>
</dbReference>
<dbReference type="InterPro" id="IPR031322">
    <property type="entry name" value="Shikimate/glucono_kinase"/>
</dbReference>
<dbReference type="InterPro" id="IPR000623">
    <property type="entry name" value="Shikimate_kinase/TSH1"/>
</dbReference>
<dbReference type="InterPro" id="IPR023000">
    <property type="entry name" value="Shikimate_kinase_CS"/>
</dbReference>
<dbReference type="PANTHER" id="PTHR21087">
    <property type="entry name" value="SHIKIMATE KINASE"/>
    <property type="match status" value="1"/>
</dbReference>
<dbReference type="PANTHER" id="PTHR21087:SF16">
    <property type="entry name" value="SHIKIMATE KINASE 1, CHLOROPLASTIC"/>
    <property type="match status" value="1"/>
</dbReference>
<dbReference type="Pfam" id="PF01202">
    <property type="entry name" value="SKI"/>
    <property type="match status" value="1"/>
</dbReference>
<dbReference type="PRINTS" id="PR01100">
    <property type="entry name" value="SHIKIMTKNASE"/>
</dbReference>
<dbReference type="SUPFAM" id="SSF52540">
    <property type="entry name" value="P-loop containing nucleoside triphosphate hydrolases"/>
    <property type="match status" value="1"/>
</dbReference>
<dbReference type="PROSITE" id="PS01128">
    <property type="entry name" value="SHIKIMATE_KINASE"/>
    <property type="match status" value="1"/>
</dbReference>
<evidence type="ECO:0000250" key="1"/>
<evidence type="ECO:0000269" key="2">
    <source>
    </source>
</evidence>
<evidence type="ECO:0000305" key="3"/>
<evidence type="ECO:0007829" key="4">
    <source>
        <dbReference type="PDB" id="1ZUH"/>
    </source>
</evidence>
<evidence type="ECO:0007829" key="5">
    <source>
        <dbReference type="PDB" id="1ZUI"/>
    </source>
</evidence>
<evidence type="ECO:0007829" key="6">
    <source>
        <dbReference type="PDB" id="3MUF"/>
    </source>
</evidence>
<name>AROK_HELPY</name>
<feature type="chain" id="PRO_0000192387" description="Shikimate kinase">
    <location>
        <begin position="1"/>
        <end position="162"/>
    </location>
</feature>
<feature type="region of interest" description="LID domain">
    <location>
        <begin position="109"/>
        <end position="123"/>
    </location>
</feature>
<feature type="binding site" evidence="1">
    <location>
        <begin position="11"/>
        <end position="16"/>
    </location>
    <ligand>
        <name>ATP</name>
        <dbReference type="ChEBI" id="CHEBI:30616"/>
    </ligand>
</feature>
<feature type="binding site" evidence="1">
    <location>
        <position position="15"/>
    </location>
    <ligand>
        <name>Mg(2+)</name>
        <dbReference type="ChEBI" id="CHEBI:18420"/>
    </ligand>
</feature>
<feature type="binding site">
    <location>
        <position position="33"/>
    </location>
    <ligand>
        <name>substrate</name>
    </ligand>
</feature>
<feature type="binding site">
    <location>
        <position position="57"/>
    </location>
    <ligand>
        <name>substrate</name>
    </ligand>
</feature>
<feature type="binding site">
    <location>
        <position position="80"/>
    </location>
    <ligand>
        <name>substrate</name>
    </ligand>
</feature>
<feature type="binding site" evidence="1">
    <location>
        <position position="116"/>
    </location>
    <ligand>
        <name>ATP</name>
        <dbReference type="ChEBI" id="CHEBI:30616"/>
    </ligand>
</feature>
<feature type="binding site">
    <location>
        <position position="132"/>
    </location>
    <ligand>
        <name>substrate</name>
    </ligand>
</feature>
<feature type="strand" evidence="4">
    <location>
        <begin position="3"/>
        <end position="8"/>
    </location>
</feature>
<feature type="helix" evidence="4">
    <location>
        <begin position="14"/>
        <end position="25"/>
    </location>
</feature>
<feature type="strand" evidence="4">
    <location>
        <begin position="29"/>
        <end position="31"/>
    </location>
</feature>
<feature type="helix" evidence="4">
    <location>
        <begin position="32"/>
        <end position="40"/>
    </location>
</feature>
<feature type="helix" evidence="4">
    <location>
        <begin position="44"/>
        <end position="50"/>
    </location>
</feature>
<feature type="helix" evidence="4">
    <location>
        <begin position="53"/>
        <end position="68"/>
    </location>
</feature>
<feature type="strand" evidence="4">
    <location>
        <begin position="75"/>
        <end position="77"/>
    </location>
</feature>
<feature type="helix" evidence="4">
    <location>
        <begin position="80"/>
        <end position="84"/>
    </location>
</feature>
<feature type="helix" evidence="4">
    <location>
        <begin position="86"/>
        <end position="88"/>
    </location>
</feature>
<feature type="strand" evidence="4">
    <location>
        <begin position="91"/>
        <end position="98"/>
    </location>
</feature>
<feature type="helix" evidence="4">
    <location>
        <begin position="101"/>
        <end position="108"/>
    </location>
</feature>
<feature type="helix" evidence="6">
    <location>
        <begin position="110"/>
        <end position="114"/>
    </location>
</feature>
<feature type="helix" evidence="5">
    <location>
        <begin position="117"/>
        <end position="120"/>
    </location>
</feature>
<feature type="helix" evidence="4">
    <location>
        <begin position="123"/>
        <end position="138"/>
    </location>
</feature>
<feature type="strand" evidence="4">
    <location>
        <begin position="141"/>
        <end position="145"/>
    </location>
</feature>
<feature type="helix" evidence="4">
    <location>
        <begin position="146"/>
        <end position="148"/>
    </location>
</feature>
<feature type="helix" evidence="4">
    <location>
        <begin position="150"/>
        <end position="159"/>
    </location>
</feature>